<protein>
    <recommendedName>
        <fullName evidence="1">D-tagatose-1,6-bisphosphate aldolase subunit GatY</fullName>
        <shortName evidence="1">TBPA</shortName>
        <shortName evidence="1">TagBP aldolase</shortName>
        <ecNumber evidence="1">4.1.2.40</ecNumber>
    </recommendedName>
    <alternativeName>
        <fullName evidence="1">D-tagatose-bisphosphate aldolase class II</fullName>
    </alternativeName>
    <alternativeName>
        <fullName evidence="1">Tagatose-bisphosphate aldolase</fullName>
    </alternativeName>
</protein>
<gene>
    <name evidence="1" type="primary">gatY</name>
    <name type="ordered locus">ECDH10B_2249</name>
</gene>
<proteinExistence type="inferred from homology"/>
<reference key="1">
    <citation type="journal article" date="2008" name="J. Bacteriol.">
        <title>The complete genome sequence of Escherichia coli DH10B: insights into the biology of a laboratory workhorse.</title>
        <authorList>
            <person name="Durfee T."/>
            <person name="Nelson R."/>
            <person name="Baldwin S."/>
            <person name="Plunkett G. III"/>
            <person name="Burland V."/>
            <person name="Mau B."/>
            <person name="Petrosino J.F."/>
            <person name="Qin X."/>
            <person name="Muzny D.M."/>
            <person name="Ayele M."/>
            <person name="Gibbs R.A."/>
            <person name="Csorgo B."/>
            <person name="Posfai G."/>
            <person name="Weinstock G.M."/>
            <person name="Blattner F.R."/>
        </authorList>
    </citation>
    <scope>NUCLEOTIDE SEQUENCE [LARGE SCALE GENOMIC DNA]</scope>
    <source>
        <strain>K12 / DH10B</strain>
    </source>
</reference>
<organism>
    <name type="scientific">Escherichia coli (strain K12 / DH10B)</name>
    <dbReference type="NCBI Taxonomy" id="316385"/>
    <lineage>
        <taxon>Bacteria</taxon>
        <taxon>Pseudomonadati</taxon>
        <taxon>Pseudomonadota</taxon>
        <taxon>Gammaproteobacteria</taxon>
        <taxon>Enterobacterales</taxon>
        <taxon>Enterobacteriaceae</taxon>
        <taxon>Escherichia</taxon>
    </lineage>
</organism>
<name>GATY_ECODH</name>
<sequence>MYVVSTKQMLNNAQRGGYAVPAFNIHNLETMQVVVETAANLHAPVIIAGTPGTFTHAGTENLLALVSAMAKQYHHPLAIHLDHHTKFDDIAQKVRSGVRSVMIDASHLPFAQNISRVKEVVDFCHRFDVSVEAELGQLGGQEDDVQVNEADALYTNPAQAREFAEATGIDSLAVAIGTAHGMYASAPALDFSRLENIRQWVNLPLVLHGASGLSTKDIQQTIKLGICKINVATELKNAFSQALKNYLTEHPEATDPRDYLQSAKSAMRDVVSKVIADCGCEGRA</sequence>
<comment type="function">
    <text evidence="1">Catalytic subunit of the tagatose-1,6-bisphosphate aldolase GatYZ, which catalyzes the reversible aldol condensation of dihydroxyacetone phosphate (DHAP or glycerone-phosphate) with glyceraldehyde 3-phosphate (G3P) to produce tagatose 1,6-bisphosphate (TBP). Requires GatZ subunit for full activity and stability. Is involved in the catabolism of galactitol.</text>
</comment>
<comment type="catalytic activity">
    <reaction evidence="1">
        <text>D-tagatofuranose 1,6-bisphosphate = D-glyceraldehyde 3-phosphate + dihydroxyacetone phosphate</text>
        <dbReference type="Rhea" id="RHEA:22948"/>
        <dbReference type="ChEBI" id="CHEBI:57642"/>
        <dbReference type="ChEBI" id="CHEBI:58694"/>
        <dbReference type="ChEBI" id="CHEBI:59776"/>
        <dbReference type="EC" id="4.1.2.40"/>
    </reaction>
</comment>
<comment type="cofactor">
    <cofactor evidence="1">
        <name>Zn(2+)</name>
        <dbReference type="ChEBI" id="CHEBI:29105"/>
    </cofactor>
    <text evidence="1">Binds 1 zinc ion per subunit.</text>
</comment>
<comment type="pathway">
    <text evidence="1">Carbohydrate metabolism; D-tagatose 6-phosphate degradation; D-glyceraldehyde 3-phosphate and glycerone phosphate from D-tagatose 6-phosphate: step 2/2.</text>
</comment>
<comment type="subunit">
    <text evidence="1">Forms a complex with GatZ.</text>
</comment>
<comment type="similarity">
    <text evidence="1">Belongs to the class II fructose-bisphosphate aldolase family. TagBP aldolase GatY subfamily.</text>
</comment>
<dbReference type="EC" id="4.1.2.40" evidence="1"/>
<dbReference type="EMBL" id="CP000948">
    <property type="protein sequence ID" value="ACB03263.1"/>
    <property type="molecule type" value="Genomic_DNA"/>
</dbReference>
<dbReference type="RefSeq" id="WP_001307281.1">
    <property type="nucleotide sequence ID" value="NC_010473.1"/>
</dbReference>
<dbReference type="SMR" id="B1X7I7"/>
<dbReference type="KEGG" id="ecd:ECDH10B_2249"/>
<dbReference type="HOGENOM" id="CLU_040088_0_1_6"/>
<dbReference type="UniPathway" id="UPA00704">
    <property type="reaction ID" value="UER00716"/>
</dbReference>
<dbReference type="GO" id="GO:0005829">
    <property type="term" value="C:cytosol"/>
    <property type="evidence" value="ECO:0007669"/>
    <property type="project" value="TreeGrafter"/>
</dbReference>
<dbReference type="GO" id="GO:0009025">
    <property type="term" value="F:tagatose-bisphosphate aldolase activity"/>
    <property type="evidence" value="ECO:0007669"/>
    <property type="project" value="UniProtKB-UniRule"/>
</dbReference>
<dbReference type="GO" id="GO:0008270">
    <property type="term" value="F:zinc ion binding"/>
    <property type="evidence" value="ECO:0007669"/>
    <property type="project" value="UniProtKB-UniRule"/>
</dbReference>
<dbReference type="GO" id="GO:2001059">
    <property type="term" value="P:D-tagatose 6-phosphate catabolic process"/>
    <property type="evidence" value="ECO:0007669"/>
    <property type="project" value="UniProtKB-UniRule"/>
</dbReference>
<dbReference type="GO" id="GO:0019404">
    <property type="term" value="P:galactitol catabolic process"/>
    <property type="evidence" value="ECO:0007669"/>
    <property type="project" value="InterPro"/>
</dbReference>
<dbReference type="CDD" id="cd00947">
    <property type="entry name" value="TBP_aldolase_IIB"/>
    <property type="match status" value="1"/>
</dbReference>
<dbReference type="FunFam" id="3.20.20.70:FF:000043">
    <property type="entry name" value="D-tagatose-1,6-bisphosphate aldolase subunit GatY"/>
    <property type="match status" value="1"/>
</dbReference>
<dbReference type="Gene3D" id="3.20.20.70">
    <property type="entry name" value="Aldolase class I"/>
    <property type="match status" value="1"/>
</dbReference>
<dbReference type="HAMAP" id="MF_01294">
    <property type="entry name" value="TagBP_aldolase_GatY"/>
    <property type="match status" value="1"/>
</dbReference>
<dbReference type="InterPro" id="IPR013785">
    <property type="entry name" value="Aldolase_TIM"/>
</dbReference>
<dbReference type="InterPro" id="IPR050246">
    <property type="entry name" value="Class_II_FBP_aldolase"/>
</dbReference>
<dbReference type="InterPro" id="IPR000771">
    <property type="entry name" value="FBA_II"/>
</dbReference>
<dbReference type="InterPro" id="IPR011288">
    <property type="entry name" value="TagBP_ald_KbaY/GatY"/>
</dbReference>
<dbReference type="InterPro" id="IPR023955">
    <property type="entry name" value="TagBP_aldolase_GatY"/>
</dbReference>
<dbReference type="NCBIfam" id="TIGR00167">
    <property type="entry name" value="cbbA"/>
    <property type="match status" value="1"/>
</dbReference>
<dbReference type="NCBIfam" id="NF006626">
    <property type="entry name" value="PRK09195.1"/>
    <property type="match status" value="1"/>
</dbReference>
<dbReference type="NCBIfam" id="NF009374">
    <property type="entry name" value="PRK12737.1"/>
    <property type="match status" value="1"/>
</dbReference>
<dbReference type="NCBIfam" id="TIGR01858">
    <property type="entry name" value="tag_bisphos_ald"/>
    <property type="match status" value="1"/>
</dbReference>
<dbReference type="PANTHER" id="PTHR30304">
    <property type="entry name" value="D-TAGATOSE-1,6-BISPHOSPHATE ALDOLASE"/>
    <property type="match status" value="1"/>
</dbReference>
<dbReference type="PANTHER" id="PTHR30304:SF0">
    <property type="entry name" value="D-TAGATOSE-1,6-BISPHOSPHATE ALDOLASE SUBUNIT GATY-RELATED"/>
    <property type="match status" value="1"/>
</dbReference>
<dbReference type="Pfam" id="PF01116">
    <property type="entry name" value="F_bP_aldolase"/>
    <property type="match status" value="1"/>
</dbReference>
<dbReference type="PIRSF" id="PIRSF001359">
    <property type="entry name" value="F_bP_aldolase_II"/>
    <property type="match status" value="1"/>
</dbReference>
<dbReference type="SUPFAM" id="SSF51569">
    <property type="entry name" value="Aldolase"/>
    <property type="match status" value="1"/>
</dbReference>
<dbReference type="PROSITE" id="PS00602">
    <property type="entry name" value="ALDOLASE_CLASS_II_1"/>
    <property type="match status" value="1"/>
</dbReference>
<dbReference type="PROSITE" id="PS00806">
    <property type="entry name" value="ALDOLASE_CLASS_II_2"/>
    <property type="match status" value="1"/>
</dbReference>
<keyword id="KW-0298">Galactitol metabolism</keyword>
<keyword id="KW-0456">Lyase</keyword>
<keyword id="KW-0479">Metal-binding</keyword>
<keyword id="KW-0862">Zinc</keyword>
<evidence type="ECO:0000255" key="1">
    <source>
        <dbReference type="HAMAP-Rule" id="MF_01294"/>
    </source>
</evidence>
<feature type="chain" id="PRO_0000355334" description="D-tagatose-1,6-bisphosphate aldolase subunit GatY">
    <location>
        <begin position="1"/>
        <end position="284"/>
    </location>
</feature>
<feature type="active site" description="Proton donor" evidence="1">
    <location>
        <position position="82"/>
    </location>
</feature>
<feature type="binding site" evidence="1">
    <location>
        <position position="83"/>
    </location>
    <ligand>
        <name>Zn(2+)</name>
        <dbReference type="ChEBI" id="CHEBI:29105"/>
        <note>catalytic</note>
    </ligand>
</feature>
<feature type="binding site" evidence="1">
    <location>
        <position position="180"/>
    </location>
    <ligand>
        <name>Zn(2+)</name>
        <dbReference type="ChEBI" id="CHEBI:29105"/>
        <note>catalytic</note>
    </ligand>
</feature>
<feature type="binding site" evidence="1">
    <location>
        <position position="181"/>
    </location>
    <ligand>
        <name>dihydroxyacetone phosphate</name>
        <dbReference type="ChEBI" id="CHEBI:57642"/>
    </ligand>
</feature>
<feature type="binding site" evidence="1">
    <location>
        <position position="208"/>
    </location>
    <ligand>
        <name>Zn(2+)</name>
        <dbReference type="ChEBI" id="CHEBI:29105"/>
        <note>catalytic</note>
    </ligand>
</feature>
<feature type="binding site" evidence="1">
    <location>
        <begin position="209"/>
        <end position="211"/>
    </location>
    <ligand>
        <name>dihydroxyacetone phosphate</name>
        <dbReference type="ChEBI" id="CHEBI:57642"/>
    </ligand>
</feature>
<feature type="binding site" evidence="1">
    <location>
        <begin position="230"/>
        <end position="233"/>
    </location>
    <ligand>
        <name>dihydroxyacetone phosphate</name>
        <dbReference type="ChEBI" id="CHEBI:57642"/>
    </ligand>
</feature>
<accession>B1X7I7</accession>